<protein>
    <recommendedName>
        <fullName evidence="1">Photosystem II reaction center protein T</fullName>
        <shortName evidence="1">PSII-T</shortName>
    </recommendedName>
</protein>
<reference key="1">
    <citation type="journal article" date="1999" name="Proc. Natl. Acad. Sci. U.S.A.">
        <title>The complete chloroplast DNA sequence of the green alga Nephroselmis olivacea: insights into the architecture of ancestral chloroplast genomes.</title>
        <authorList>
            <person name="Turmel M."/>
            <person name="Otis C."/>
            <person name="Lemieux C."/>
        </authorList>
    </citation>
    <scope>NUCLEOTIDE SEQUENCE [LARGE SCALE GENOMIC DNA]</scope>
    <source>
        <strain>NIES-484 / S-N-5-8</strain>
    </source>
</reference>
<gene>
    <name evidence="1" type="primary">psbT</name>
</gene>
<proteinExistence type="inferred from homology"/>
<evidence type="ECO:0000255" key="1">
    <source>
        <dbReference type="HAMAP-Rule" id="MF_00808"/>
    </source>
</evidence>
<dbReference type="EMBL" id="AF137379">
    <property type="protein sequence ID" value="AAD54851.1"/>
    <property type="molecule type" value="Genomic_DNA"/>
</dbReference>
<dbReference type="RefSeq" id="NP_050880.1">
    <property type="nucleotide sequence ID" value="NC_000927.1"/>
</dbReference>
<dbReference type="SMR" id="Q9TKW5"/>
<dbReference type="GeneID" id="802037"/>
<dbReference type="GO" id="GO:0009535">
    <property type="term" value="C:chloroplast thylakoid membrane"/>
    <property type="evidence" value="ECO:0007669"/>
    <property type="project" value="UniProtKB-SubCell"/>
</dbReference>
<dbReference type="GO" id="GO:0009539">
    <property type="term" value="C:photosystem II reaction center"/>
    <property type="evidence" value="ECO:0007669"/>
    <property type="project" value="InterPro"/>
</dbReference>
<dbReference type="GO" id="GO:0015979">
    <property type="term" value="P:photosynthesis"/>
    <property type="evidence" value="ECO:0007669"/>
    <property type="project" value="UniProtKB-UniRule"/>
</dbReference>
<dbReference type="HAMAP" id="MF_00808">
    <property type="entry name" value="PSII_PsbT"/>
    <property type="match status" value="1"/>
</dbReference>
<dbReference type="InterPro" id="IPR001743">
    <property type="entry name" value="PSII_PsbT"/>
</dbReference>
<dbReference type="InterPro" id="IPR037268">
    <property type="entry name" value="PSII_PsbT_sf"/>
</dbReference>
<dbReference type="PANTHER" id="PTHR36411">
    <property type="match status" value="1"/>
</dbReference>
<dbReference type="PANTHER" id="PTHR36411:SF2">
    <property type="entry name" value="PHOTOSYSTEM II REACTION CENTER PROTEIN T"/>
    <property type="match status" value="1"/>
</dbReference>
<dbReference type="Pfam" id="PF01405">
    <property type="entry name" value="PsbT"/>
    <property type="match status" value="1"/>
</dbReference>
<dbReference type="SUPFAM" id="SSF161029">
    <property type="entry name" value="Photosystem II reaction center protein T, PsbT"/>
    <property type="match status" value="1"/>
</dbReference>
<comment type="function">
    <text evidence="1">Found at the monomer-monomer interface of the photosystem II (PS II) dimer, plays a role in assembly and dimerization of PSII. PSII is a light-driven water plastoquinone oxidoreductase, using light energy to abstract electrons from H(2)O, generating a proton gradient subsequently used for ATP formation.</text>
</comment>
<comment type="subunit">
    <text evidence="1">PSII is composed of 1 copy each of membrane proteins PsbA, PsbB, PsbC, PsbD, PsbE, PsbF, PsbH, PsbI, PsbJ, PsbK, PsbL, PsbM, PsbT, PsbY, PsbZ, Psb30/Ycf12, at least 3 peripheral proteins of the oxygen-evolving complex and a large number of cofactors. It forms dimeric complexes.</text>
</comment>
<comment type="subcellular location">
    <subcellularLocation>
        <location evidence="1">Plastid</location>
        <location evidence="1">Chloroplast thylakoid membrane</location>
        <topology evidence="1">Single-pass membrane protein</topology>
    </subcellularLocation>
</comment>
<comment type="similarity">
    <text evidence="1">Belongs to the PsbT family.</text>
</comment>
<geneLocation type="chloroplast"/>
<name>PSBT_NEPOL</name>
<feature type="chain" id="PRO_0000217956" description="Photosystem II reaction center protein T">
    <location>
        <begin position="1"/>
        <end position="31"/>
    </location>
</feature>
<feature type="transmembrane region" description="Helical" evidence="1">
    <location>
        <begin position="3"/>
        <end position="23"/>
    </location>
</feature>
<sequence length="31" mass="3632">MEALVYTFLLISTLGIIFFGIFFREPPRIVK</sequence>
<keyword id="KW-0150">Chloroplast</keyword>
<keyword id="KW-0472">Membrane</keyword>
<keyword id="KW-0602">Photosynthesis</keyword>
<keyword id="KW-0604">Photosystem II</keyword>
<keyword id="KW-0934">Plastid</keyword>
<keyword id="KW-0793">Thylakoid</keyword>
<keyword id="KW-0812">Transmembrane</keyword>
<keyword id="KW-1133">Transmembrane helix</keyword>
<accession>Q9TKW5</accession>
<organism>
    <name type="scientific">Nephroselmis olivacea</name>
    <name type="common">Green alga</name>
    <dbReference type="NCBI Taxonomy" id="31312"/>
    <lineage>
        <taxon>Eukaryota</taxon>
        <taxon>Viridiplantae</taxon>
        <taxon>Chlorophyta</taxon>
        <taxon>Nephroselmidophyceae</taxon>
        <taxon>Nephroselmidales</taxon>
        <taxon>Nephroselmidaceae</taxon>
        <taxon>Nephroselmis</taxon>
    </lineage>
</organism>